<proteinExistence type="evidence at protein level"/>
<accession>P23890</accession>
<accession>Q2M6H0</accession>
<keyword id="KW-0002">3D-structure</keyword>
<keyword id="KW-0010">Activator</keyword>
<keyword id="KW-0997">Cell inner membrane</keyword>
<keyword id="KW-1003">Cell membrane</keyword>
<keyword id="KW-1015">Disulfide bond</keyword>
<keyword id="KW-0238">DNA-binding</keyword>
<keyword id="KW-0472">Membrane</keyword>
<keyword id="KW-1185">Reference proteome</keyword>
<keyword id="KW-0804">Transcription</keyword>
<keyword id="KW-0805">Transcription regulation</keyword>
<keyword id="KW-0812">Transmembrane</keyword>
<keyword id="KW-1133">Transmembrane helix</keyword>
<organism>
    <name type="scientific">Escherichia coli (strain K12)</name>
    <dbReference type="NCBI Taxonomy" id="83333"/>
    <lineage>
        <taxon>Bacteria</taxon>
        <taxon>Pseudomonadati</taxon>
        <taxon>Pseudomonadota</taxon>
        <taxon>Gammaproteobacteria</taxon>
        <taxon>Enterobacterales</taxon>
        <taxon>Enterobacteriaceae</taxon>
        <taxon>Escherichia</taxon>
    </lineage>
</organism>
<feature type="chain" id="PRO_0000081345" description="Transcriptional activator CadC">
    <location>
        <begin position="1"/>
        <end position="512"/>
    </location>
</feature>
<feature type="topological domain" description="Cytoplasmic" evidence="12 17">
    <location>
        <begin position="1"/>
        <end position="154"/>
    </location>
</feature>
<feature type="transmembrane region" description="Helical" evidence="1">
    <location>
        <begin position="155"/>
        <end position="180"/>
    </location>
</feature>
<feature type="topological domain" description="Periplasmic" evidence="12 17">
    <location>
        <begin position="181"/>
        <end position="512"/>
    </location>
</feature>
<feature type="DNA-binding region" description="OmpR/PhoB-type" evidence="2">
    <location>
        <begin position="3"/>
        <end position="102"/>
    </location>
</feature>
<feature type="site" description="Essential for the stimulus-dependent interaction with LysP" evidence="11">
    <location>
        <position position="265"/>
    </location>
</feature>
<feature type="site" description="Essential for the stimulus-dependent interaction with LysP" evidence="11">
    <location>
        <position position="268"/>
    </location>
</feature>
<feature type="disulfide bond" evidence="7 8 18 19 20 21">
    <location>
        <begin position="208"/>
        <end position="272"/>
    </location>
</feature>
<feature type="mutagenesis site" description="Enhances the DNA-binding affinity and induces constitutive cadBA promoter activation independent of pH and lysine." evidence="13">
    <original>E</original>
    <variation>R</variation>
    <location>
        <position position="30"/>
    </location>
</feature>
<feature type="mutagenesis site" description="Strongly affects DNA-binding. Abolishes activation of the cadBA promoter under all tested conditions." evidence="13">
    <original>R</original>
    <variation>A</variation>
    <location>
        <position position="32"/>
    </location>
</feature>
<feature type="mutagenesis site" description="Strongly affects DNA-binding. Abolishes activation of the cadBA promoter under all tested conditions." evidence="13">
    <original>R</original>
    <variation>A</variation>
    <location>
        <position position="50"/>
    </location>
</feature>
<feature type="mutagenesis site" description="Strongly affects DNA-binding. Abolishes activation of the cadBA promoter under all tested conditions." evidence="13">
    <original>R</original>
    <variation>A</variation>
    <location>
        <position position="60"/>
    </location>
</feature>
<feature type="mutagenesis site" description="Strongly affects DNA-binding. Abolishes activation of the cadBA promoter under all tested conditions." evidence="13">
    <original>V</original>
    <variation>A</variation>
    <location>
        <position position="63"/>
    </location>
</feature>
<feature type="mutagenesis site" description="Strongly affects DNA-binding. Abolishes activation of the cadBA promoter under all tested conditions." evidence="13">
    <original>T</original>
    <variation>A</variation>
    <location>
        <position position="64"/>
    </location>
</feature>
<feature type="mutagenesis site" description="Strongly affects DNA-binding. Abolishes activation of the cadBA promoter under all tested conditions." evidence="13">
    <original>H</original>
    <variation>A</variation>
    <location>
        <position position="66"/>
    </location>
</feature>
<feature type="mutagenesis site" description="Strongly affects DNA-binding. Abolishes activation of the cadBA promoter under all tested conditions." evidence="13">
    <original>T</original>
    <variation>A</variation>
    <location>
        <position position="69"/>
    </location>
</feature>
<feature type="mutagenesis site" description="Strongly affects DNA-binding. Abolishes activation of the cadBA promoter under all tested conditions." evidence="13">
    <original>Q</original>
    <variation>A</variation>
    <location>
        <position position="70"/>
    </location>
</feature>
<feature type="mutagenesis site" description="Strongly affects DNA-binding. Abolishes activation of the cadBA promoter under all tested conditions." evidence="13">
    <original>S</original>
    <variation>A</variation>
    <location>
        <position position="73"/>
    </location>
</feature>
<feature type="mutagenesis site" description="Strongly affects DNA-binding. Abolishes activation of the cadBA promoter under all tested conditions." evidence="13">
    <original>R</original>
    <variation>A</variation>
    <location>
        <position position="76"/>
    </location>
</feature>
<feature type="mutagenesis site" description="Strongly affects DNA-binding. Abolishes activation of the cadBA promoter under all tested conditions." evidence="13">
    <original>K</original>
    <variation>A</variation>
    <location>
        <position position="95"/>
    </location>
</feature>
<feature type="mutagenesis site" description="Strongly affects DNA-binding. Abolishes activation of the cadBA promoter under all tested conditions." evidence="13">
    <original>R</original>
    <variation>A</variation>
    <location>
        <position position="96"/>
    </location>
</feature>
<feature type="mutagenesis site" description="Significantly reduced dependence on EF-P for translation, increased levels of protein in an efp-strain." evidence="10">
    <original>PPPIP</original>
    <variation>AAAIS</variation>
    <location>
        <begin position="120"/>
        <end position="124"/>
    </location>
</feature>
<feature type="mutagenesis site" description="Reduced dependence on EF-P for translation, increased levels of protein in an efp- strain." evidence="10">
    <original>P</original>
    <variation>A</variation>
    <location>
        <position position="121"/>
    </location>
</feature>
<feature type="mutagenesis site" description="Expression of cadBA becomes lysine-independent. Strong decrease in regulation by LysP." evidence="5">
    <original>FWVWFFF</original>
    <variation>LVVALVA</variation>
    <location>
        <begin position="159"/>
        <end position="165"/>
    </location>
</feature>
<feature type="mutagenesis site" description="Expression of cadBA becomes lysine-independent. Lack of regulation by LysP." evidence="5">
    <location>
        <begin position="159"/>
        <end position="165"/>
    </location>
</feature>
<feature type="mutagenesis site" description="Expression of cadBA is lysine-dependent." evidence="5">
    <original>FW</original>
    <variation>LV</variation>
    <location>
        <begin position="159"/>
        <end position="160"/>
    </location>
</feature>
<feature type="mutagenesis site" description="Expression of cadBA becomes lysine-independent. Strong decrease in regulation by LysP." evidence="5">
    <original>WFFF</original>
    <variation>ALVA</variation>
    <location>
        <begin position="162"/>
        <end position="165"/>
    </location>
</feature>
<feature type="mutagenesis site" description="Expression of cadBA becomes lysine-independent, but to a minor degree. Small decrease in regulation by LysP." evidence="5">
    <original>W</original>
    <variation>A</variation>
    <location>
        <position position="162"/>
    </location>
</feature>
<feature type="mutagenesis site" description="Expression of cadBA is lysine-dependent." evidence="5">
    <original>F</original>
    <variation>L</variation>
    <location>
        <position position="163"/>
    </location>
</feature>
<feature type="mutagenesis site" description="Expression of cadBA is lysine-dependent." evidence="5">
    <original>F</original>
    <variation>V</variation>
    <location>
        <position position="164"/>
    </location>
</feature>
<feature type="mutagenesis site" description="Expression of cadBA becomes lysine-independent. Strong decrease in regulation by LysP. Prevents interaction with LysP." evidence="5 11">
    <original>F</original>
    <variation>A</variation>
    <location>
        <position position="165"/>
    </location>
</feature>
<feature type="mutagenesis site" description="Confers both pH- and lysine-independent cadBA expression." evidence="14">
    <original>G</original>
    <variation>D</variation>
    <location>
        <position position="170"/>
    </location>
</feature>
<feature type="mutagenesis site" description="Retains wild-type activity, induces expression of the cadAB operon only at low pH in the presence of lysine." evidence="8">
    <original>C</original>
    <variation>A</variation>
    <location>
        <position position="172"/>
    </location>
</feature>
<feature type="mutagenesis site" description="Abolishes response to the external low pH signal." evidence="6">
    <original>D</original>
    <variation>A</variation>
    <variation>E</variation>
    <variation>N</variation>
    <location>
        <position position="198"/>
    </location>
</feature>
<feature type="mutagenesis site" description="Abolishes response to the external low pH signal." evidence="6">
    <original>D</original>
    <variation>A</variation>
    <variation>E</variation>
    <variation>N</variation>
    <location>
        <position position="200"/>
    </location>
</feature>
<feature type="mutagenesis site" description="Induces cadBA expression at pH 5.8 regardless of the presence of lysine, and at pH 7.6 when lysine is present. Weakens interaction with LysP." evidence="8">
    <original>C</original>
    <variation>A</variation>
    <location>
        <position position="208"/>
    </location>
</feature>
<feature type="mutagenesis site" description="Decreases inhibition by cadaverine." evidence="9">
    <original>D</original>
    <variation>W</variation>
    <location>
        <position position="225"/>
    </location>
</feature>
<feature type="mutagenesis site" description="Decreases inhibition by cadaverine." evidence="9">
    <original>T</original>
    <variation>A</variation>
    <location>
        <position position="229"/>
    </location>
</feature>
<feature type="mutagenesis site" description="Confers pH-independent cadBA expression." evidence="6">
    <original>K</original>
    <variation>R</variation>
    <location>
        <position position="242"/>
    </location>
</feature>
<feature type="mutagenesis site" description="Confers both pH- and lysine-independent cadBA expression." evidence="14">
    <original>N</original>
    <variation>K</variation>
    <location>
        <position position="263"/>
    </location>
</feature>
<feature type="mutagenesis site" description="Displays lysine-independent, but pH-dependent induction of cadBA; when associated with A-268." evidence="11">
    <original>R</original>
    <variation>A</variation>
    <location>
        <position position="265"/>
    </location>
</feature>
<feature type="mutagenesis site" description="Is inserted into the membrane properly and can induce cadBA expression in the presence or absence of lysine." evidence="5">
    <original>R</original>
    <variation>C</variation>
    <location>
        <position position="265"/>
    </location>
</feature>
<feature type="mutagenesis site" description="Is inserted into the membrane properly and can induce cadBA expression in the presence of lysine but not in absence of lysine." evidence="5">
    <original>R</original>
    <variation>K</variation>
    <variation>S</variation>
    <variation>Q</variation>
    <location>
        <position position="265"/>
    </location>
</feature>
<feature type="mutagenesis site" description="Confers both pH- and lysine-independent cadBA expression." evidence="14">
    <original>Q</original>
    <variation>P</variation>
    <location>
        <position position="266"/>
    </location>
</feature>
<feature type="mutagenesis site" description="Displays lysine-independent, but pH-dependent induction of cadBA; when associated with A-265." evidence="11">
    <original>R</original>
    <variation>A</variation>
    <location>
        <position position="268"/>
    </location>
</feature>
<feature type="mutagenesis site" description="Induces cadBA expression at pH 5.8 regardless of the presence of lysine, and at pH 7.6 when lysine is present. Weakens interaction with LysP." evidence="8">
    <original>C</original>
    <variation>A</variation>
    <location>
        <position position="272"/>
    </location>
</feature>
<feature type="mutagenesis site" description="Confers pH-independent cadBA expression, but does not affect the requirement for the lysine signal." evidence="14">
    <original>G</original>
    <variation>D</variation>
    <location>
        <position position="284"/>
    </location>
</feature>
<feature type="mutagenesis site" description="Decreases inhibition by cadaverine." evidence="9">
    <original>E</original>
    <variation>Q</variation>
    <location>
        <position position="447"/>
    </location>
</feature>
<feature type="mutagenesis site" description="Decreases inhibition by cadaverine." evidence="9">
    <original>Y</original>
    <variation>A</variation>
    <variation>I</variation>
    <location>
        <position position="453"/>
    </location>
</feature>
<feature type="mutagenesis site" description="Abolishes response to the external low pH signal." evidence="6">
    <original>E</original>
    <variation>A</variation>
    <variation>D</variation>
    <variation>Q</variation>
    <variation>R</variation>
    <location>
        <position position="461"/>
    </location>
</feature>
<feature type="mutagenesis site" description="Abolishes response to the external low pH signal." evidence="6">
    <original>R</original>
    <variation>A</variation>
    <variation>E</variation>
    <variation>K</variation>
    <variation>Q</variation>
    <location>
        <position position="467"/>
    </location>
</feature>
<feature type="mutagenesis site" description="Abolishes response to the external low pH signal." evidence="6">
    <original>E</original>
    <variation>A</variation>
    <variation>Q</variation>
    <variation>R</variation>
    <location>
        <position position="468"/>
    </location>
</feature>
<feature type="mutagenesis site" description="Can still respond to pH, albeit with lower activity." evidence="6">
    <original>E</original>
    <variation>D</variation>
    <location>
        <position position="468"/>
    </location>
</feature>
<feature type="mutagenesis site" description="Confers pH-independent cadBA expression." evidence="6">
    <original>D</original>
    <variation>A</variation>
    <variation>N</variation>
    <location>
        <position position="471"/>
    </location>
</feature>
<feature type="mutagenesis site" description="Abolishes response to the external low pH signal." evidence="6">
    <original>D</original>
    <variation>E</variation>
    <variation>R</variation>
    <location>
        <position position="471"/>
    </location>
</feature>
<feature type="mutagenesis site" description="Confers pH-independent cadBA expression, but does not affect the requirement for the lysine signal." evidence="14">
    <original>D</original>
    <variation>G</variation>
    <location>
        <position position="471"/>
    </location>
</feature>
<feature type="mutagenesis site" description="Confers pH-independent cadBA expression. Decreases inhibition by cadaverine." evidence="6 9">
    <original>L</original>
    <variation>A</variation>
    <location>
        <position position="474"/>
    </location>
</feature>
<feature type="mutagenesis site" description="Confers pH-independent cadBA expression, but does not affect the requirement for the lysine signal. Decreases inhibition by cadaverine." evidence="9 14">
    <original>T</original>
    <variation>A</variation>
    <location>
        <position position="475"/>
    </location>
</feature>
<feature type="mutagenesis site" description="Decreases inhibition by cadaverine." evidence="9">
    <original>T</original>
    <variation>S</variation>
    <location>
        <position position="475"/>
    </location>
</feature>
<feature type="mutagenesis site" description="Does not alter pH sensing." evidence="6">
    <original>F</original>
    <variation>A</variation>
    <location>
        <position position="477"/>
    </location>
</feature>
<feature type="mutagenesis site" description="Is almost pH-insensitive. Decreases inhibition by cadaverine." evidence="6 9">
    <original>F</original>
    <variation>I</variation>
    <location>
        <position position="477"/>
    </location>
</feature>
<feature type="mutagenesis site" description="Confers pH-independent cadBA expression. Decreases inhibition by cadaverine." evidence="6 9">
    <original>N</original>
    <variation>A</variation>
    <location>
        <position position="478"/>
    </location>
</feature>
<feature type="mutagenesis site" description="Confers pH-independent cadBA expression, but does not affect the requirement for the lysine signal." evidence="14">
    <original>L</original>
    <variation>S</variation>
    <location>
        <position position="479"/>
    </location>
</feature>
<feature type="mutagenesis site" description="Confers pH-independent cadBA expression, but does not affect the requirement for the lysine signal." evidence="14">
    <original>P</original>
    <variation>L</variation>
    <location>
        <position position="499"/>
    </location>
</feature>
<feature type="strand" evidence="25">
    <location>
        <begin position="6"/>
        <end position="8"/>
    </location>
</feature>
<feature type="strand" evidence="25">
    <location>
        <begin position="11"/>
        <end position="14"/>
    </location>
</feature>
<feature type="helix" evidence="25">
    <location>
        <begin position="15"/>
        <end position="17"/>
    </location>
</feature>
<feature type="strand" evidence="25">
    <location>
        <begin position="19"/>
        <end position="21"/>
    </location>
</feature>
<feature type="strand" evidence="25">
    <location>
        <begin position="26"/>
        <end position="28"/>
    </location>
</feature>
<feature type="helix" evidence="25">
    <location>
        <begin position="31"/>
        <end position="42"/>
    </location>
</feature>
<feature type="turn" evidence="25">
    <location>
        <begin position="43"/>
        <end position="45"/>
    </location>
</feature>
<feature type="strand" evidence="25">
    <location>
        <begin position="46"/>
        <end position="48"/>
    </location>
</feature>
<feature type="helix" evidence="25">
    <location>
        <begin position="50"/>
        <end position="57"/>
    </location>
</feature>
<feature type="helix" evidence="25">
    <location>
        <begin position="65"/>
        <end position="80"/>
    </location>
</feature>
<feature type="strand" evidence="25">
    <location>
        <begin position="89"/>
        <end position="93"/>
    </location>
</feature>
<feature type="turn" evidence="25">
    <location>
        <begin position="94"/>
        <end position="96"/>
    </location>
</feature>
<feature type="strand" evidence="25">
    <location>
        <begin position="97"/>
        <end position="100"/>
    </location>
</feature>
<feature type="strand" evidence="25">
    <location>
        <begin position="104"/>
        <end position="106"/>
    </location>
</feature>
<feature type="strand" evidence="23">
    <location>
        <begin position="195"/>
        <end position="204"/>
    </location>
</feature>
<feature type="strand" evidence="24">
    <location>
        <begin position="206"/>
        <end position="211"/>
    </location>
</feature>
<feature type="helix" evidence="23">
    <location>
        <begin position="216"/>
        <end position="234"/>
    </location>
</feature>
<feature type="strand" evidence="23">
    <location>
        <begin position="238"/>
        <end position="241"/>
    </location>
</feature>
<feature type="strand" evidence="23">
    <location>
        <begin position="253"/>
        <end position="262"/>
    </location>
</feature>
<feature type="strand" evidence="23">
    <location>
        <begin position="273"/>
        <end position="280"/>
    </location>
</feature>
<feature type="turn" evidence="23">
    <location>
        <begin position="281"/>
        <end position="283"/>
    </location>
</feature>
<feature type="strand" evidence="23">
    <location>
        <begin position="286"/>
        <end position="292"/>
    </location>
</feature>
<feature type="helix" evidence="23">
    <location>
        <begin position="299"/>
        <end position="313"/>
    </location>
</feature>
<feature type="helix" evidence="23">
    <location>
        <begin position="320"/>
        <end position="329"/>
    </location>
</feature>
<feature type="helix" evidence="23">
    <location>
        <begin position="334"/>
        <end position="336"/>
    </location>
</feature>
<feature type="helix" evidence="23">
    <location>
        <begin position="337"/>
        <end position="349"/>
    </location>
</feature>
<feature type="helix" evidence="23">
    <location>
        <begin position="352"/>
        <end position="368"/>
    </location>
</feature>
<feature type="helix" evidence="23">
    <location>
        <begin position="373"/>
        <end position="389"/>
    </location>
</feature>
<feature type="helix" evidence="23">
    <location>
        <begin position="394"/>
        <end position="408"/>
    </location>
</feature>
<feature type="helix" evidence="23">
    <location>
        <begin position="411"/>
        <end position="413"/>
    </location>
</feature>
<feature type="helix" evidence="23">
    <location>
        <begin position="417"/>
        <end position="430"/>
    </location>
</feature>
<feature type="helix" evidence="23">
    <location>
        <begin position="433"/>
        <end position="446"/>
    </location>
</feature>
<feature type="helix" evidence="23">
    <location>
        <begin position="450"/>
        <end position="462"/>
    </location>
</feature>
<feature type="helix" evidence="23">
    <location>
        <begin position="466"/>
        <end position="479"/>
    </location>
</feature>
<feature type="helix" evidence="23">
    <location>
        <begin position="483"/>
        <end position="491"/>
    </location>
</feature>
<feature type="strand" evidence="23">
    <location>
        <begin position="492"/>
        <end position="494"/>
    </location>
</feature>
<feature type="helix" evidence="23">
    <location>
        <begin position="498"/>
        <end position="501"/>
    </location>
</feature>
<feature type="helix" evidence="23">
    <location>
        <begin position="503"/>
        <end position="510"/>
    </location>
</feature>
<sequence length="512" mass="57813">MQQPVVRVGEWLVTPSINQISRNGRQLTLEPRLIDLLVFFAQHSGEVLSRDELIDNVWKRSIVTNHVVTQSISELRKSLKDNDEDSPVYIATVPKRGYKLMVPVIWYSEEEGEEIMLSSPPPIPEAVPATDSPSHSLNIQNTATPPEQSPVKSKRFTTFWVWFFFLLSLGICVALVAFSSLDTRLPMSKSRILLNPRDIDINMVNKSCNSWSSPYQLSYAIGVGDLVATSLNTFSTFMVHDKINYNIDEPSSSGKTLSIAFVNQRQYRAQQCFMSIKLVDNADGSTMLDKRYVITNGNQLAIQNDLLESLSKALNQPWPQRMQETLQKILPHRGALLTNFYQAHDYLLHGDDKSLNRASELLGEIVQSSPEFTYARAEKALVDIVRHSQHPLDEKQLAALNTEIDNIVTLPELNNLSIIYQIKAVSALVKGKTDESYQAINTGIDLEMSWLNYVLLGKVYEMKGMNREAADAYLTAFNLRPGANTLYWIENGIFQTSVPYVVPYLDKFLASE</sequence>
<evidence type="ECO:0000255" key="1"/>
<evidence type="ECO:0000255" key="2">
    <source>
        <dbReference type="PROSITE-ProRule" id="PRU01091"/>
    </source>
</evidence>
<evidence type="ECO:0000269" key="3">
    <source>
    </source>
</evidence>
<evidence type="ECO:0000269" key="4">
    <source>
    </source>
</evidence>
<evidence type="ECO:0000269" key="5">
    <source>
    </source>
</evidence>
<evidence type="ECO:0000269" key="6">
    <source>
    </source>
</evidence>
<evidence type="ECO:0000269" key="7">
    <source>
    </source>
</evidence>
<evidence type="ECO:0000269" key="8">
    <source>
    </source>
</evidence>
<evidence type="ECO:0000269" key="9">
    <source>
    </source>
</evidence>
<evidence type="ECO:0000269" key="10">
    <source>
    </source>
</evidence>
<evidence type="ECO:0000269" key="11">
    <source>
    </source>
</evidence>
<evidence type="ECO:0000269" key="12">
    <source>
    </source>
</evidence>
<evidence type="ECO:0000269" key="13">
    <source>
    </source>
</evidence>
<evidence type="ECO:0000269" key="14">
    <source>
    </source>
</evidence>
<evidence type="ECO:0000303" key="15">
    <source>
    </source>
</evidence>
<evidence type="ECO:0000305" key="16"/>
<evidence type="ECO:0000305" key="17">
    <source>
    </source>
</evidence>
<evidence type="ECO:0007744" key="18">
    <source>
        <dbReference type="PDB" id="3LY7"/>
    </source>
</evidence>
<evidence type="ECO:0007744" key="19">
    <source>
        <dbReference type="PDB" id="3LY8"/>
    </source>
</evidence>
<evidence type="ECO:0007744" key="20">
    <source>
        <dbReference type="PDB" id="3LY9"/>
    </source>
</evidence>
<evidence type="ECO:0007744" key="21">
    <source>
        <dbReference type="PDB" id="3LYA"/>
    </source>
</evidence>
<evidence type="ECO:0007744" key="22">
    <source>
        <dbReference type="PDB" id="5JU7"/>
    </source>
</evidence>
<evidence type="ECO:0007829" key="23">
    <source>
        <dbReference type="PDB" id="3LY7"/>
    </source>
</evidence>
<evidence type="ECO:0007829" key="24">
    <source>
        <dbReference type="PDB" id="3LY8"/>
    </source>
</evidence>
<evidence type="ECO:0007829" key="25">
    <source>
        <dbReference type="PDB" id="5JU7"/>
    </source>
</evidence>
<protein>
    <recommendedName>
        <fullName evidence="16">Transcriptional activator CadC</fullName>
    </recommendedName>
    <alternativeName>
        <fullName evidence="15">Membrane-integrated pH sensor CadC</fullName>
    </alternativeName>
</protein>
<gene>
    <name type="primary">cadC</name>
    <name type="ordered locus">b4133</name>
    <name type="ordered locus">JW4094</name>
</gene>
<comment type="function">
    <text evidence="3 4 5 6 13">Regulates the lysine- and pH-dependent expression of the lysine decarboxylase CadA and the cadaverine-lysine antiporter CadB (PubMed:1370290, PubMed:16491024, PubMed:18086202, PubMed:21216950). At low external pH, and in the presence of external lysine, CadC activates transcription of the cadBA operon by binding directly to two sites, Cad1 and Cad2, within the cadBA promoter region (Pcad) (PubMed:16491024, PubMed:28432336). Preferentially binds to AT-rich regions within the Cad1 promoter (PubMed:28432336).</text>
</comment>
<comment type="activity regulation">
    <text evidence="5 6 8 9 11">Activation of CadC requires two stimuli, lysine and low pH (PubMed:18086202, PubMed:21216950, PubMed:21486484, PubMed:24056175). CadC shows an extremely low affinity for lysine, and it senses the extracellular lysine not directly but indirectly via interaction with the lysine permease LysP (PubMed:18086202). At a low external lysine concentration, CadC is inactivated by an interaction with LysP. When lysine is abundantly available, the interaction between LysP and CadC is released, and CadC becomes susceptible to activation by low pH (PubMed:18086202, PubMed:24056175). Acidification of the external milieu is sensed by protonation of a patch of acidic amino acids within the periplasmic domain and associated to conformational and/or oligomerization effects (PubMed:21216950). The pH-dependent regulation may be due to the presence/absence of a disulfide bond within the periplasmic domain (PubMed:21486484). At pH 7.6, a disulfide bond is found in the inactive state of CadC. At pH 5.8, disulfide bond formation is prevented, which transforms CadC into a semi-active state with respect to both the pH and the lysine stimuli (PubMed:21486484). Activity is also feedback inhibited by cadaverine (PubMed:22999955). Cadaverine binds first to the central cavity, which putatively triggers intramolecular rearrangements to expose the binding sites for cadaverine at the dimer interface, which inactivates CadC and consequently shuts off transcription of the cadBA operon (PubMed:22999955).</text>
</comment>
<comment type="subunit">
    <text evidence="5 7 11 12">Homodimer (PubMed:21308846, PubMed:24946151). Dimerization of the periplasmic domain is required for activation of the cadBA operon (PubMed:24946151). Interacts strongly with the lysine permease LysP in the absence of lysine or at low lysine concentrations (PubMed:18086202, PubMed:24056175). Interaction is markedly attenuated under increasing lysine levels (PubMed:24056175). Concomitant pH-dependent protonation of periplasmic amino acids in both proteins dissolves their electrostatic connections resulting in further destabilization of the CadC/LysP interaction (PubMed:24056175).</text>
</comment>
<comment type="interaction">
    <interactant intactId="EBI-6401662">
        <id>P23890</id>
    </interactant>
    <interactant intactId="EBI-6401655">
        <id>P25737</id>
        <label>lysP</label>
    </interactant>
    <organismsDiffer>false</organismsDiffer>
    <experiments>2</experiments>
</comment>
<comment type="subcellular location">
    <subcellularLocation>
        <location evidence="12 14">Cell inner membrane</location>
        <topology evidence="12">Single-pass membrane protein</topology>
    </subcellularLocation>
    <text evidence="12">Membrane insertion requires the SecA translocase.</text>
</comment>
<comment type="induction">
    <text evidence="10">Translation requires the translation elongation factor P (EF-P). This requirement is reduced as the number of consecutive Pro residues in the protein is decreased.</text>
</comment>
<comment type="domain">
    <text evidence="5 6 7 11 12 14">Contains a cytoplasmic DNA-binding N-terminal domain, a transmembrane domain and a periplasmic C-terminal domain (PubMed:24946151, PubMed:7830562). A cluster of aromatic amino acids within the transmembrane domain is important for lysine-dependent regulation of CadC (PubMed:18086202). The transmembrane domain of CadC is important for the interaction with LysP, but the periplasmic domain of CadC is also important in facilitating correct positioning of the two proteins (PubMed:24056175). A cluster of negatively charged amino acids (Asp-198, Asp-200, Glu-461, Glu-468 and Asp-471) forms a negatively charged patch on the surface of the periplasmic domain and is crucial for pH detection (PubMed:21216950). Dimerization requires the periplasmic domain, but not the transmembrane domain (PubMed:24946151). Conformational changes at the dimer interface may functionally influence the transcriptional activity (PubMed:21308846).</text>
</comment>
<comment type="PTM">
    <text evidence="8">Contains a functionally important disulfide bond, which may provide structural support for the pH-dependent activation via a switch of the sensor between the inactive and active state.</text>
</comment>
<comment type="disruption phenotype">
    <text evidence="3">Loss of Pcad activity.</text>
</comment>
<reference key="1">
    <citation type="journal article" date="1992" name="J. Bacteriol.">
        <title>Identification of elements involved in transcriptional regulation of the Escherichia coli cad operon by external pH.</title>
        <authorList>
            <person name="Watson N."/>
            <person name="Dunyak D.S."/>
            <person name="Rosey E.L."/>
            <person name="Slonczewski J.L."/>
            <person name="Olson E.R."/>
        </authorList>
    </citation>
    <scope>NUCLEOTIDE SEQUENCE [GENOMIC DNA]</scope>
    <scope>FUNCTION</scope>
    <scope>DISRUPTION PHENOTYPE</scope>
    <source>
        <strain>JLS821</strain>
    </source>
</reference>
<reference key="2">
    <citation type="journal article" date="1995" name="Nucleic Acids Res.">
        <title>Analysis of the Escherichia coli genome VI: DNA sequence of the region from 92.8 through 100 minutes.</title>
        <authorList>
            <person name="Burland V.D."/>
            <person name="Plunkett G. III"/>
            <person name="Sofia H.J."/>
            <person name="Daniels D.L."/>
            <person name="Blattner F.R."/>
        </authorList>
    </citation>
    <scope>NUCLEOTIDE SEQUENCE [LARGE SCALE GENOMIC DNA]</scope>
    <source>
        <strain>K12 / MG1655 / ATCC 47076</strain>
    </source>
</reference>
<reference key="3">
    <citation type="journal article" date="1997" name="Science">
        <title>The complete genome sequence of Escherichia coli K-12.</title>
        <authorList>
            <person name="Blattner F.R."/>
            <person name="Plunkett G. III"/>
            <person name="Bloch C.A."/>
            <person name="Perna N.T."/>
            <person name="Burland V."/>
            <person name="Riley M."/>
            <person name="Collado-Vides J."/>
            <person name="Glasner J.D."/>
            <person name="Rode C.K."/>
            <person name="Mayhew G.F."/>
            <person name="Gregor J."/>
            <person name="Davis N.W."/>
            <person name="Kirkpatrick H.A."/>
            <person name="Goeden M.A."/>
            <person name="Rose D.J."/>
            <person name="Mau B."/>
            <person name="Shao Y."/>
        </authorList>
    </citation>
    <scope>NUCLEOTIDE SEQUENCE [LARGE SCALE GENOMIC DNA]</scope>
    <source>
        <strain>K12 / MG1655 / ATCC 47076</strain>
    </source>
</reference>
<reference key="4">
    <citation type="journal article" date="2006" name="Mol. Syst. Biol.">
        <title>Highly accurate genome sequences of Escherichia coli K-12 strains MG1655 and W3110.</title>
        <authorList>
            <person name="Hayashi K."/>
            <person name="Morooka N."/>
            <person name="Yamamoto Y."/>
            <person name="Fujita K."/>
            <person name="Isono K."/>
            <person name="Choi S."/>
            <person name="Ohtsubo E."/>
            <person name="Baba T."/>
            <person name="Wanner B.L."/>
            <person name="Mori H."/>
            <person name="Horiuchi T."/>
        </authorList>
    </citation>
    <scope>NUCLEOTIDE SEQUENCE [LARGE SCALE GENOMIC DNA]</scope>
    <source>
        <strain>K12 / W3110 / ATCC 27325 / DSM 5911</strain>
    </source>
</reference>
<reference key="5">
    <citation type="journal article" date="1994" name="Mol. Microbiol.">
        <title>Altered pH and lysine signalling mutants of cadC, a gene encoding a membrane-bound transcriptional activator of the Escherichia coli cadBA operon.</title>
        <authorList>
            <person name="Dell C.L."/>
            <person name="Neely M.N."/>
            <person name="Olson E.R."/>
        </authorList>
    </citation>
    <scope>SUBCELLULAR LOCATION</scope>
    <scope>TOPOLOGY</scope>
    <scope>DOMAIN</scope>
    <scope>MUTAGENESIS OF GLY-170; ASN-263; GLN-266; GLY-284; ASP-471; THR-475; LEU-479 AND PRO-499</scope>
</reference>
<reference key="6">
    <citation type="journal article" date="2005" name="J. Mol. Microbiol. Biotechnol.">
        <title>CadC-mediated activation of the cadBA promoter in Escherichia coli.</title>
        <authorList>
            <person name="Kuper C."/>
            <person name="Jung K."/>
        </authorList>
    </citation>
    <scope>FUNCTION</scope>
    <scope>DNA-BINDING</scope>
</reference>
<reference key="7">
    <citation type="journal article" date="2008" name="Mol. Microbiol.">
        <title>The membrane-integrated transcriptional activator CadC of Escherichia coli senses lysine indirectly via the interaction with the lysine permease LysP.</title>
        <authorList>
            <person name="Tetsch L."/>
            <person name="Koller C."/>
            <person name="Haneburger I."/>
            <person name="Jung K."/>
        </authorList>
    </citation>
    <scope>FUNCTION</scope>
    <scope>ACTIVITY REGULATION</scope>
    <scope>INTERACTION WITH LYSP</scope>
    <scope>DOMAIN</scope>
    <scope>MUTAGENESIS OF 159-PHE--PHE-165; 159-PHE-TRP-160; 162-TRP--PHE-165; TRP-162; PHE-163; PHE-164; PHE-165 AND ARG-265</scope>
</reference>
<reference key="8">
    <citation type="journal article" date="2011" name="J. Biol. Chem.">
        <title>New insights into the signaling mechanism of the pH-responsive, membrane-integrated transcriptional activator CadC of Escherichia coli.</title>
        <authorList>
            <person name="Haneburger I."/>
            <person name="Eichinger A."/>
            <person name="Skerra A."/>
            <person name="Jung K."/>
        </authorList>
    </citation>
    <scope>FUNCTION</scope>
    <scope>ACTIVITY REGULATION</scope>
    <scope>DOMAIN</scope>
    <scope>MUTAGENESIS OF ASP-198; ASP-200; LYS-242; GLU-461; ARG-467; GLU-468; ASP-471; LEU-474; PHE-477 AND ASN-478</scope>
</reference>
<reference key="9">
    <citation type="journal article" date="2011" name="BMC Microbiol.">
        <title>Detection and function of an intramolecular disulfide bond in the pH-responsive CadC of Escherichia coli.</title>
        <authorList>
            <person name="Tetsch L."/>
            <person name="Koller C."/>
            <person name="Doenhoefer A."/>
            <person name="Jung K."/>
        </authorList>
    </citation>
    <scope>ACTIVITY REGULATION</scope>
    <scope>DISULFIDE BOND</scope>
    <scope>MUTAGENESIS OF CYS-172; CYS-208 AND CYS-272</scope>
</reference>
<reference key="10">
    <citation type="journal article" date="2012" name="J. Mol. Biol.">
        <title>Deactivation of the E. coli pH stress sensor CadC by cadaverine.</title>
        <authorList>
            <person name="Haneburger I."/>
            <person name="Fritz G."/>
            <person name="Jurkschat N."/>
            <person name="Tetsch L."/>
            <person name="Eichinger A."/>
            <person name="Skerra A."/>
            <person name="Gerland U."/>
            <person name="Jung K."/>
        </authorList>
    </citation>
    <scope>ACTIVITY REGULATION</scope>
    <scope>MUTAGENESIS OF ASP-225; THR-229; GLU-447; TYR-453; LEU-474; THR-475; PHE-477 AND ASN-478</scope>
</reference>
<reference key="11">
    <citation type="journal article" date="2013" name="Science">
        <title>Translation elongation factor EF-P alleviates ribosome stalling at polyproline stretches.</title>
        <authorList>
            <person name="Ude S."/>
            <person name="Lassak J."/>
            <person name="Starosta A.L."/>
            <person name="Kraxenberger T."/>
            <person name="Wilson D.N."/>
            <person name="Jung K."/>
        </authorList>
    </citation>
    <scope>INDUCTION</scope>
    <scope>MUTAGENESIS OF PRO-121 AND 120-PRO--PRO-124</scope>
    <source>
        <strain>K12 / BW25113</strain>
        <strain>K12 / MG1655 / ATCC 47076</strain>
    </source>
</reference>
<reference key="12">
    <citation type="journal article" date="2014" name="J. Mol. Biol.">
        <title>New insights into the interplay between the lysine transporter LysP and the pH sensor CadC in Escherichia coli.</title>
        <authorList>
            <person name="Rauschmeier M."/>
            <person name="Schueppel V."/>
            <person name="Tetsch L."/>
            <person name="Jung K."/>
        </authorList>
    </citation>
    <scope>ACTIVITY REGULATION</scope>
    <scope>INTERACTION WITH LYSP</scope>
    <scope>DOMAIN</scope>
    <scope>MUTAGENESIS OF PHE-165; ARG-265 AND ARG-268</scope>
</reference>
<reference key="13">
    <citation type="journal article" date="2014" name="J. Mol. Biol.">
        <title>Topology, dimerization, and stability of the single-span membrane protein CadC.</title>
        <authorList>
            <person name="Lindner E."/>
            <person name="White S.H."/>
        </authorList>
    </citation>
    <scope>SUBUNIT</scope>
    <scope>SUBCELLULAR LOCATION</scope>
    <scope>DOMAIN</scope>
    <source>
        <strain>K12</strain>
    </source>
</reference>
<reference evidence="18 19 20 21" key="14">
    <citation type="journal article" date="2011" name="Protein Sci.">
        <title>Crystal structure of the sensory domain of Escherichia coli CadC, a member of the ToxR-like protein family.</title>
        <authorList>
            <person name="Eichinger A."/>
            <person name="Haneburger I."/>
            <person name="Koller C."/>
            <person name="Jung K."/>
            <person name="Skerra A."/>
        </authorList>
    </citation>
    <scope>X-RAY CRYSTALLOGRAPHY (1.80 ANGSTROMS) OF 188-512 OF WILD-TYPE AND MUTANTS GLU-471 AND ASN-471</scope>
    <scope>SUBUNIT</scope>
    <scope>DOMAIN</scope>
    <scope>DISULFIDE BOND</scope>
</reference>
<reference evidence="22" key="15">
    <citation type="journal article" date="2017" name="Sci. Rep.">
        <title>Structure-function analysis of the DNA-binding domain of a transmembrane transcriptional activator.</title>
        <authorList>
            <person name="Schlundt A."/>
            <person name="Buchner S."/>
            <person name="Janowski R."/>
            <person name="Heydenreich T."/>
            <person name="Heermann R."/>
            <person name="Lassak J."/>
            <person name="Geerlof A."/>
            <person name="Stehle R."/>
            <person name="Niessing D."/>
            <person name="Jung K."/>
            <person name="Sattler M."/>
        </authorList>
    </citation>
    <scope>X-RAY CRYSTALLOGRAPHY (2.05 ANGSTROMS) OF 2-107</scope>
    <scope>FUNCTION</scope>
    <scope>DNA-BINDING</scope>
    <scope>MUTAGENESIS OF GLU-30; ARG-32; ARG-50; ARG-60; VAL-63; THR-64; HIS-66; THR-69; GLN-70; SER-73; ARG-76; LYS-95 AND ARG-96</scope>
</reference>
<name>CADC_ECOLI</name>
<dbReference type="EMBL" id="M67452">
    <property type="protein sequence ID" value="AAA23531.1"/>
    <property type="molecule type" value="Genomic_DNA"/>
</dbReference>
<dbReference type="EMBL" id="U14003">
    <property type="protein sequence ID" value="AAA97033.1"/>
    <property type="molecule type" value="Genomic_DNA"/>
</dbReference>
<dbReference type="EMBL" id="U00096">
    <property type="protein sequence ID" value="AAC77094.1"/>
    <property type="molecule type" value="Genomic_DNA"/>
</dbReference>
<dbReference type="EMBL" id="AP009048">
    <property type="protein sequence ID" value="BAE78136.1"/>
    <property type="molecule type" value="Genomic_DNA"/>
</dbReference>
<dbReference type="PIR" id="C41968">
    <property type="entry name" value="C41968"/>
</dbReference>
<dbReference type="RefSeq" id="NP_418557.1">
    <property type="nucleotide sequence ID" value="NC_000913.3"/>
</dbReference>
<dbReference type="RefSeq" id="WP_001187173.1">
    <property type="nucleotide sequence ID" value="NZ_SSZK01000018.1"/>
</dbReference>
<dbReference type="PDB" id="3LY7">
    <property type="method" value="X-ray"/>
    <property type="resolution" value="1.80 A"/>
    <property type="chains" value="A=188-512"/>
</dbReference>
<dbReference type="PDB" id="3LY8">
    <property type="method" value="X-ray"/>
    <property type="resolution" value="1.90 A"/>
    <property type="chains" value="A=188-512"/>
</dbReference>
<dbReference type="PDB" id="3LY9">
    <property type="method" value="X-ray"/>
    <property type="resolution" value="2.20 A"/>
    <property type="chains" value="A=188-512"/>
</dbReference>
<dbReference type="PDB" id="3LYA">
    <property type="method" value="X-ray"/>
    <property type="resolution" value="2.30 A"/>
    <property type="chains" value="A=188-512"/>
</dbReference>
<dbReference type="PDB" id="5JU7">
    <property type="method" value="X-ray"/>
    <property type="resolution" value="2.05 A"/>
    <property type="chains" value="A=2-107"/>
</dbReference>
<dbReference type="PDBsum" id="3LY7"/>
<dbReference type="PDBsum" id="3LY8"/>
<dbReference type="PDBsum" id="3LY9"/>
<dbReference type="PDBsum" id="3LYA"/>
<dbReference type="PDBsum" id="5JU7"/>
<dbReference type="SMR" id="P23890"/>
<dbReference type="BioGRID" id="4260781">
    <property type="interactions" value="68"/>
</dbReference>
<dbReference type="BioGRID" id="852945">
    <property type="interactions" value="1"/>
</dbReference>
<dbReference type="DIP" id="DIP-9239N"/>
<dbReference type="FunCoup" id="P23890">
    <property type="interactions" value="13"/>
</dbReference>
<dbReference type="IntAct" id="P23890">
    <property type="interactions" value="1"/>
</dbReference>
<dbReference type="STRING" id="511145.b4133"/>
<dbReference type="PaxDb" id="511145-b4133"/>
<dbReference type="DNASU" id="948653"/>
<dbReference type="EnsemblBacteria" id="AAC77094">
    <property type="protein sequence ID" value="AAC77094"/>
    <property type="gene ID" value="b4133"/>
</dbReference>
<dbReference type="GeneID" id="948653"/>
<dbReference type="KEGG" id="ecj:JW4094"/>
<dbReference type="KEGG" id="eco:b4133"/>
<dbReference type="KEGG" id="ecoc:C3026_22340"/>
<dbReference type="PATRIC" id="fig|1411691.4.peg.2566"/>
<dbReference type="EchoBASE" id="EB0131"/>
<dbReference type="eggNOG" id="COG3710">
    <property type="taxonomic scope" value="Bacteria"/>
</dbReference>
<dbReference type="HOGENOM" id="CLU_040424_0_0_6"/>
<dbReference type="InParanoid" id="P23890"/>
<dbReference type="OMA" id="VIWCTEE"/>
<dbReference type="OrthoDB" id="6311790at2"/>
<dbReference type="PhylomeDB" id="P23890"/>
<dbReference type="BioCyc" id="EcoCyc:PD00436"/>
<dbReference type="EvolutionaryTrace" id="P23890"/>
<dbReference type="PRO" id="PR:P23890"/>
<dbReference type="Proteomes" id="UP000000625">
    <property type="component" value="Chromosome"/>
</dbReference>
<dbReference type="GO" id="GO:0005829">
    <property type="term" value="C:cytosol"/>
    <property type="evidence" value="ECO:0000318"/>
    <property type="project" value="GO_Central"/>
</dbReference>
<dbReference type="GO" id="GO:0005886">
    <property type="term" value="C:plasma membrane"/>
    <property type="evidence" value="ECO:0000314"/>
    <property type="project" value="EcoCyc"/>
</dbReference>
<dbReference type="GO" id="GO:0032993">
    <property type="term" value="C:protein-DNA complex"/>
    <property type="evidence" value="ECO:0000318"/>
    <property type="project" value="GO_Central"/>
</dbReference>
<dbReference type="GO" id="GO:0000156">
    <property type="term" value="F:phosphorelay response regulator activity"/>
    <property type="evidence" value="ECO:0000318"/>
    <property type="project" value="GO_Central"/>
</dbReference>
<dbReference type="GO" id="GO:0042803">
    <property type="term" value="F:protein homodimerization activity"/>
    <property type="evidence" value="ECO:0000314"/>
    <property type="project" value="EcoCyc"/>
</dbReference>
<dbReference type="GO" id="GO:0000976">
    <property type="term" value="F:transcription cis-regulatory region binding"/>
    <property type="evidence" value="ECO:0000318"/>
    <property type="project" value="GO_Central"/>
</dbReference>
<dbReference type="GO" id="GO:0045893">
    <property type="term" value="P:positive regulation of DNA-templated transcription"/>
    <property type="evidence" value="ECO:0000315"/>
    <property type="project" value="EcoCyc"/>
</dbReference>
<dbReference type="GO" id="GO:0006355">
    <property type="term" value="P:regulation of DNA-templated transcription"/>
    <property type="evidence" value="ECO:0000318"/>
    <property type="project" value="GO_Central"/>
</dbReference>
<dbReference type="CDD" id="cd00383">
    <property type="entry name" value="trans_reg_C"/>
    <property type="match status" value="1"/>
</dbReference>
<dbReference type="FunFam" id="1.10.10.10:FF:000442">
    <property type="entry name" value="Transcriptional activator CadC"/>
    <property type="match status" value="1"/>
</dbReference>
<dbReference type="FunFam" id="3.40.50.11830:FF:000001">
    <property type="entry name" value="Transcriptional activator CadC"/>
    <property type="match status" value="1"/>
</dbReference>
<dbReference type="Gene3D" id="3.40.50.11830">
    <property type="match status" value="1"/>
</dbReference>
<dbReference type="Gene3D" id="1.25.40.10">
    <property type="entry name" value="Tetratricopeptide repeat domain"/>
    <property type="match status" value="1"/>
</dbReference>
<dbReference type="Gene3D" id="1.10.10.10">
    <property type="entry name" value="Winged helix-like DNA-binding domain superfamily/Winged helix DNA-binding domain"/>
    <property type="match status" value="1"/>
</dbReference>
<dbReference type="InterPro" id="IPR040970">
    <property type="entry name" value="CadC_C1"/>
</dbReference>
<dbReference type="InterPro" id="IPR001867">
    <property type="entry name" value="OmpR/PhoB-type_DNA-bd"/>
</dbReference>
<dbReference type="InterPro" id="IPR016032">
    <property type="entry name" value="Sig_transdc_resp-reg_C-effctor"/>
</dbReference>
<dbReference type="InterPro" id="IPR011990">
    <property type="entry name" value="TPR-like_helical_dom_sf"/>
</dbReference>
<dbReference type="InterPro" id="IPR036388">
    <property type="entry name" value="WH-like_DNA-bd_sf"/>
</dbReference>
<dbReference type="NCBIfam" id="NF007540">
    <property type="entry name" value="PRK10153.1"/>
    <property type="match status" value="1"/>
</dbReference>
<dbReference type="Pfam" id="PF18500">
    <property type="entry name" value="CadC_C1"/>
    <property type="match status" value="1"/>
</dbReference>
<dbReference type="Pfam" id="PF00486">
    <property type="entry name" value="Trans_reg_C"/>
    <property type="match status" value="1"/>
</dbReference>
<dbReference type="SMART" id="SM00862">
    <property type="entry name" value="Trans_reg_C"/>
    <property type="match status" value="1"/>
</dbReference>
<dbReference type="SUPFAM" id="SSF46894">
    <property type="entry name" value="C-terminal effector domain of the bipartite response regulators"/>
    <property type="match status" value="1"/>
</dbReference>
<dbReference type="PROSITE" id="PS51755">
    <property type="entry name" value="OMPR_PHOB"/>
    <property type="match status" value="1"/>
</dbReference>